<organism>
    <name type="scientific">Nephroselmis olivacea</name>
    <name type="common">Green alga</name>
    <dbReference type="NCBI Taxonomy" id="31312"/>
    <lineage>
        <taxon>Eukaryota</taxon>
        <taxon>Viridiplantae</taxon>
        <taxon>Chlorophyta</taxon>
        <taxon>Nephroselmidophyceae</taxon>
        <taxon>Nephroselmidales</taxon>
        <taxon>Nephroselmidaceae</taxon>
        <taxon>Nephroselmis</taxon>
    </lineage>
</organism>
<proteinExistence type="inferred from homology"/>
<geneLocation type="chloroplast"/>
<reference key="1">
    <citation type="journal article" date="1999" name="Proc. Natl. Acad. Sci. U.S.A.">
        <title>The complete chloroplast DNA sequence of the green alga Nephroselmis olivacea: insights into the architecture of ancestral chloroplast genomes.</title>
        <authorList>
            <person name="Turmel M."/>
            <person name="Otis C."/>
            <person name="Lemieux C."/>
        </authorList>
    </citation>
    <scope>NUCLEOTIDE SEQUENCE [LARGE SCALE GENOMIC DNA]</scope>
    <source>
        <strain>NIES-484 / S-N-5-8</strain>
    </source>
</reference>
<comment type="function">
    <text evidence="2">Component of the cytochrome b6-f complex, which mediates electron transfer between photosystem II (PSII) and photosystem I (PSI), cyclic electron flow around PSI, and state transitions.</text>
</comment>
<comment type="subunit">
    <text evidence="1">The 4 large subunits of the cytochrome b6-f complex are cytochrome b6, subunit IV (17 kDa polypeptide, petD), cytochrome f and the Rieske protein, while the 4 small subunits are petG, petL, petM and petN. The complex functions as a dimer (By similarity).</text>
</comment>
<comment type="subcellular location">
    <subcellularLocation>
        <location evidence="2">Plastid</location>
        <location evidence="2">Chloroplast thylakoid membrane</location>
        <topology evidence="2">Multi-pass membrane protein</topology>
    </subcellularLocation>
</comment>
<comment type="similarity">
    <text evidence="2">Belongs to the cytochrome b family. PetD subfamily.</text>
</comment>
<dbReference type="EMBL" id="AF137379">
    <property type="protein sequence ID" value="AAD54784.1"/>
    <property type="molecule type" value="Genomic_DNA"/>
</dbReference>
<dbReference type="RefSeq" id="NP_050813.1">
    <property type="nucleotide sequence ID" value="NC_000927.1"/>
</dbReference>
<dbReference type="SMR" id="Q9TL32"/>
<dbReference type="GeneID" id="802004"/>
<dbReference type="GO" id="GO:0009535">
    <property type="term" value="C:chloroplast thylakoid membrane"/>
    <property type="evidence" value="ECO:0007669"/>
    <property type="project" value="UniProtKB-SubCell"/>
</dbReference>
<dbReference type="GO" id="GO:0045158">
    <property type="term" value="F:electron transporter, transferring electrons within cytochrome b6/f complex of photosystem II activity"/>
    <property type="evidence" value="ECO:0007669"/>
    <property type="project" value="UniProtKB-UniRule"/>
</dbReference>
<dbReference type="GO" id="GO:0045156">
    <property type="term" value="F:electron transporter, transferring electrons within the cyclic electron transport pathway of photosynthesis activity"/>
    <property type="evidence" value="ECO:0007669"/>
    <property type="project" value="InterPro"/>
</dbReference>
<dbReference type="GO" id="GO:0016491">
    <property type="term" value="F:oxidoreductase activity"/>
    <property type="evidence" value="ECO:0007669"/>
    <property type="project" value="InterPro"/>
</dbReference>
<dbReference type="GO" id="GO:0009767">
    <property type="term" value="P:photosynthetic electron transport chain"/>
    <property type="evidence" value="ECO:0007669"/>
    <property type="project" value="InterPro"/>
</dbReference>
<dbReference type="CDD" id="cd00290">
    <property type="entry name" value="cytochrome_b_C"/>
    <property type="match status" value="1"/>
</dbReference>
<dbReference type="FunFam" id="1.10.287.980:FF:000001">
    <property type="entry name" value="Cytochrome b6-f complex subunit 4"/>
    <property type="match status" value="1"/>
</dbReference>
<dbReference type="FunFam" id="1.20.5.510:FF:000002">
    <property type="entry name" value="Cytochrome b6-f complex subunit 4"/>
    <property type="match status" value="1"/>
</dbReference>
<dbReference type="Gene3D" id="1.10.287.980">
    <property type="entry name" value="plastocyanin oxidoreductase"/>
    <property type="match status" value="1"/>
</dbReference>
<dbReference type="Gene3D" id="1.20.5.510">
    <property type="entry name" value="Single helix bin"/>
    <property type="match status" value="1"/>
</dbReference>
<dbReference type="HAMAP" id="MF_01344">
    <property type="entry name" value="Cytb6_f_subIV"/>
    <property type="match status" value="1"/>
</dbReference>
<dbReference type="InterPro" id="IPR005798">
    <property type="entry name" value="Cyt_b/b6_C"/>
</dbReference>
<dbReference type="InterPro" id="IPR036150">
    <property type="entry name" value="Cyt_b/b6_C_sf"/>
</dbReference>
<dbReference type="InterPro" id="IPR005870">
    <property type="entry name" value="Cyt_b6/f_cplx_suIV"/>
</dbReference>
<dbReference type="InterPro" id="IPR048260">
    <property type="entry name" value="Cytochrome_b_C_euk/bac"/>
</dbReference>
<dbReference type="NCBIfam" id="TIGR01156">
    <property type="entry name" value="cytb6_f_IV"/>
    <property type="match status" value="1"/>
</dbReference>
<dbReference type="PANTHER" id="PTHR19271">
    <property type="entry name" value="CYTOCHROME B"/>
    <property type="match status" value="1"/>
</dbReference>
<dbReference type="PANTHER" id="PTHR19271:SF16">
    <property type="entry name" value="CYTOCHROME B"/>
    <property type="match status" value="1"/>
</dbReference>
<dbReference type="Pfam" id="PF00032">
    <property type="entry name" value="Cytochrom_B_C"/>
    <property type="match status" value="1"/>
</dbReference>
<dbReference type="PIRSF" id="PIRSF000033">
    <property type="entry name" value="B6f_17K"/>
    <property type="match status" value="1"/>
</dbReference>
<dbReference type="SUPFAM" id="SSF81648">
    <property type="entry name" value="a domain/subunit of cytochrome bc1 complex (Ubiquinol-cytochrome c reductase)"/>
    <property type="match status" value="1"/>
</dbReference>
<dbReference type="PROSITE" id="PS51003">
    <property type="entry name" value="CYTB_CTER"/>
    <property type="match status" value="1"/>
</dbReference>
<keyword id="KW-0150">Chloroplast</keyword>
<keyword id="KW-0249">Electron transport</keyword>
<keyword id="KW-0472">Membrane</keyword>
<keyword id="KW-0602">Photosynthesis</keyword>
<keyword id="KW-0934">Plastid</keyword>
<keyword id="KW-0793">Thylakoid</keyword>
<keyword id="KW-0812">Transmembrane</keyword>
<keyword id="KW-1133">Transmembrane helix</keyword>
<keyword id="KW-0813">Transport</keyword>
<name>PETD_NEPOL</name>
<gene>
    <name evidence="2" type="primary">petD</name>
</gene>
<evidence type="ECO:0000250" key="1"/>
<evidence type="ECO:0000255" key="2">
    <source>
        <dbReference type="HAMAP-Rule" id="MF_01344"/>
    </source>
</evidence>
<sequence length="160" mass="17376">MSVTKKPDLTDPVLRAKLAKGMGHNYYGEPAWPNDLLYMFPVVILGTLSCITGLAVLDPAAIGEPANPFATPLEILPEWYFFPVFQLLRTVPNKLLGVLLMAAVPAGLLTVPFIESINKFQNPFRRPVATTVFLIGTVVAIWLGIGATLPIDISLTLGLF</sequence>
<protein>
    <recommendedName>
        <fullName evidence="2">Cytochrome b6-f complex subunit 4</fullName>
    </recommendedName>
    <alternativeName>
        <fullName evidence="2">17 kDa polypeptide</fullName>
    </alternativeName>
</protein>
<accession>Q9TL32</accession>
<feature type="chain" id="PRO_0000061870" description="Cytochrome b6-f complex subunit 4">
    <location>
        <begin position="1"/>
        <end position="160"/>
    </location>
</feature>
<feature type="transmembrane region" description="Helical" evidence="2">
    <location>
        <begin position="36"/>
        <end position="56"/>
    </location>
</feature>
<feature type="transmembrane region" description="Helical" evidence="2">
    <location>
        <begin position="95"/>
        <end position="115"/>
    </location>
</feature>
<feature type="transmembrane region" description="Helical" evidence="2">
    <location>
        <begin position="131"/>
        <end position="151"/>
    </location>
</feature>